<name>NCAP_I68A6</name>
<proteinExistence type="evidence at protein level"/>
<gene>
    <name evidence="1" type="primary">NP</name>
</gene>
<sequence length="498" mass="55954">MASQGTKRSYEQMETDGERQNATEIRASVGKMIDGIGRFYIQMCTELKLSDYEGRLIQNSLTIERMVLSAFDERRNKYLEEHPSAGKDPKKTGGPIYKRVDGKWMRELVLYDKGEIRRIWRQANNGDDATAGLTHMMIWHSNLNDTTYQRTRALVRTGMDPRMCSLMQGSTLPRRSGAAGAAVKGVGTMVMELIRMIKRGINDRNFWRGENGRKTRSAYERMCNILKGKFQTAAQRAMMDQVRESRNPGNAEIEDLIFLARSALILRGSVAHKSCLPACVYGPAVASGYDFEKEGYSLVGIDPFKLLQNSQVYSLIRPNENPAHKSQLVWMACNSAAFEDLRVLSFIRGTKVSPRGKLSTRGVQIASNENMDAMESSTLELRSRYWAIRTRSGGNTNQQRASAGQISVQPAFSVQRNLPFDKPTIMAAFTGNTEGRTSDMRAEIIRMMEGAKPEEMSFQGRGVFELSDEKAANPIVPSFDMSNEGSYFFGDNAEEYDN</sequence>
<evidence type="ECO:0000255" key="1">
    <source>
        <dbReference type="HAMAP-Rule" id="MF_04070"/>
    </source>
</evidence>
<evidence type="ECO:0000256" key="2">
    <source>
        <dbReference type="SAM" id="MobiDB-lite"/>
    </source>
</evidence>
<evidence type="ECO:0000269" key="3">
    <source>
    </source>
</evidence>
<evidence type="ECO:0007829" key="4">
    <source>
        <dbReference type="PDB" id="7NT8"/>
    </source>
</evidence>
<accession>P03467</accession>
<protein>
    <recommendedName>
        <fullName evidence="1">Nucleoprotein</fullName>
    </recommendedName>
    <alternativeName>
        <fullName evidence="1">Nucleocapsid protein</fullName>
        <shortName evidence="1">Protein N</shortName>
    </alternativeName>
</protein>
<organismHost>
    <name type="scientific">Aves</name>
    <dbReference type="NCBI Taxonomy" id="8782"/>
</organismHost>
<organismHost>
    <name type="scientific">Cetacea</name>
    <name type="common">whales</name>
    <dbReference type="NCBI Taxonomy" id="9721"/>
</organismHost>
<organismHost>
    <name type="scientific">Homo sapiens</name>
    <name type="common">Human</name>
    <dbReference type="NCBI Taxonomy" id="9606"/>
</organismHost>
<organismHost>
    <name type="scientific">Phocidae</name>
    <name type="common">true seals</name>
    <dbReference type="NCBI Taxonomy" id="9709"/>
</organismHost>
<organismHost>
    <name type="scientific">Sus scrofa</name>
    <name type="common">Pig</name>
    <dbReference type="NCBI Taxonomy" id="9823"/>
</organismHost>
<organism>
    <name type="scientific">Influenza A virus (strain A/Northern Territory/60/1968 H3N2)</name>
    <name type="common">Influenza A virus (strain NT60)</name>
    <name type="synonym">Influenza A virus (strain A/NT/60/1968 H3N2)</name>
    <dbReference type="NCBI Taxonomy" id="384505"/>
    <lineage>
        <taxon>Viruses</taxon>
        <taxon>Riboviria</taxon>
        <taxon>Orthornavirae</taxon>
        <taxon>Negarnaviricota</taxon>
        <taxon>Polyploviricotina</taxon>
        <taxon>Insthoviricetes</taxon>
        <taxon>Articulavirales</taxon>
        <taxon>Orthomyxoviridae</taxon>
        <taxon>Alphainfluenzavirus</taxon>
        <taxon>Alphainfluenzavirus influenzae</taxon>
        <taxon>Influenza A virus</taxon>
    </lineage>
</organism>
<keyword id="KW-0002">3D-structure</keyword>
<keyword id="KW-0167">Capsid protein</keyword>
<keyword id="KW-1139">Helical capsid protein</keyword>
<keyword id="KW-1048">Host nucleus</keyword>
<keyword id="KW-0945">Host-virus interaction</keyword>
<keyword id="KW-0687">Ribonucleoprotein</keyword>
<keyword id="KW-0694">RNA-binding</keyword>
<keyword id="KW-0543">Viral nucleoprotein</keyword>
<keyword id="KW-1163">Viral penetration into host nucleus</keyword>
<keyword id="KW-0946">Virion</keyword>
<keyword id="KW-1160">Virus entry into host cell</keyword>
<dbReference type="EMBL" id="J02137">
    <property type="protein sequence ID" value="AAA43465.1"/>
    <property type="molecule type" value="Genomic_RNA"/>
</dbReference>
<dbReference type="PIR" id="A04078">
    <property type="entry name" value="VHIV68"/>
</dbReference>
<dbReference type="PDB" id="7NT8">
    <property type="method" value="X-ray"/>
    <property type="resolution" value="2.22 A"/>
    <property type="chains" value="A/B=1-498"/>
</dbReference>
<dbReference type="PDBsum" id="7NT8"/>
<dbReference type="SMR" id="P03467"/>
<dbReference type="GO" id="GO:0019029">
    <property type="term" value="C:helical viral capsid"/>
    <property type="evidence" value="ECO:0007669"/>
    <property type="project" value="UniProtKB-UniRule"/>
</dbReference>
<dbReference type="GO" id="GO:0043657">
    <property type="term" value="C:host cell"/>
    <property type="evidence" value="ECO:0007669"/>
    <property type="project" value="GOC"/>
</dbReference>
<dbReference type="GO" id="GO:0042025">
    <property type="term" value="C:host cell nucleus"/>
    <property type="evidence" value="ECO:0007669"/>
    <property type="project" value="UniProtKB-SubCell"/>
</dbReference>
<dbReference type="GO" id="GO:1990904">
    <property type="term" value="C:ribonucleoprotein complex"/>
    <property type="evidence" value="ECO:0007669"/>
    <property type="project" value="UniProtKB-KW"/>
</dbReference>
<dbReference type="GO" id="GO:0019013">
    <property type="term" value="C:viral nucleocapsid"/>
    <property type="evidence" value="ECO:0007669"/>
    <property type="project" value="UniProtKB-UniRule"/>
</dbReference>
<dbReference type="GO" id="GO:0003723">
    <property type="term" value="F:RNA binding"/>
    <property type="evidence" value="ECO:0007669"/>
    <property type="project" value="UniProtKB-UniRule"/>
</dbReference>
<dbReference type="GO" id="GO:0005198">
    <property type="term" value="F:structural molecule activity"/>
    <property type="evidence" value="ECO:0007669"/>
    <property type="project" value="UniProtKB-UniRule"/>
</dbReference>
<dbReference type="GO" id="GO:0046718">
    <property type="term" value="P:symbiont entry into host cell"/>
    <property type="evidence" value="ECO:0007669"/>
    <property type="project" value="UniProtKB-KW"/>
</dbReference>
<dbReference type="GO" id="GO:0075732">
    <property type="term" value="P:viral penetration into host nucleus"/>
    <property type="evidence" value="ECO:0007669"/>
    <property type="project" value="UniProtKB-UniRule"/>
</dbReference>
<dbReference type="HAMAP" id="MF_04070">
    <property type="entry name" value="INFV_NCAP"/>
    <property type="match status" value="1"/>
</dbReference>
<dbReference type="InterPro" id="IPR002141">
    <property type="entry name" value="Flu_NP"/>
</dbReference>
<dbReference type="Pfam" id="PF00506">
    <property type="entry name" value="Flu_NP"/>
    <property type="match status" value="1"/>
</dbReference>
<dbReference type="SUPFAM" id="SSF161003">
    <property type="entry name" value="flu NP-like"/>
    <property type="match status" value="1"/>
</dbReference>
<comment type="function">
    <text evidence="1">Encapsidates the negative strand viral RNA, protecting it from nucleases. The encapsidated genomic RNA is termed the ribonucleoprotein (RNP) and serves as template for transcription and replication. The RNP needs to be localized in the host nucleus to start an infectious cycle, but is too large to diffuse through the nuclear pore complex. NP comprises at least 2 nuclear localization signals that are responsible for the active RNP import into the nucleus through cellular importin alpha/beta pathway. Later in the infection, nclear export of RNPs are mediated through viral proteins NEP interacting with M1 which binds nucleoproteins. It is possible that nucleoprotein binds directly host exportin-1/XPO1 and plays an active role in RNPs nuclear export. M1 interaction with RNP seems to hide nucleoprotein's nuclear localization signals. Soon after a virion infects a new cell, M1 dissociates from the RNP under acidification of the virion driven by M2 protein. Dissociation of M1 from RNP unmasks nucleoprotein's nuclear localization signals, targeting the RNP to the nucleus.</text>
</comment>
<comment type="subunit">
    <text evidence="1">Homomultimerizes to form the nucleocapsid. May bind host exportin-1/XPO1. Binds to viral genomic RNA. Protein-RNA contacts are mediated by a combination of electrostatic interactions between positively charged residues and the phosphate backbone and planar interactions between aromatic side chains and bases.</text>
</comment>
<comment type="subcellular location">
    <subcellularLocation>
        <location evidence="1">Virion</location>
    </subcellularLocation>
    <subcellularLocation>
        <location evidence="1">Host nucleus</location>
    </subcellularLocation>
</comment>
<comment type="PTM">
    <text evidence="1 3">Late in virus-infected cells, may be cleaved from a 56-kDa protein to a 53-kDa protein by a cellular caspase. This cleavage might be a marker for the onset of apoptosis in infected cells or have a specific function in virus host interaction.</text>
</comment>
<comment type="similarity">
    <text evidence="1">Belongs to the influenza viruses nucleoprotein family.</text>
</comment>
<reference key="1">
    <citation type="journal article" date="1982" name="Nucleic Acids Res.">
        <title>The sequence of the nucleoprotein gene of human influenza A virus, strain A/NT/60/68.</title>
        <authorList>
            <person name="Huddleston J.A."/>
            <person name="Brownlee G.G."/>
        </authorList>
    </citation>
    <scope>NUCLEOTIDE SEQUENCE [GENOMIC RNA]</scope>
</reference>
<reference key="2">
    <citation type="journal article" date="1999" name="J. Virol.">
        <title>Caspase-dependent N-terminal cleavage of influenza virus nucleocapsid protein in infected cells.</title>
        <authorList>
            <person name="Zhirnov O.P."/>
            <person name="Konakova T.E."/>
            <person name="Garten W."/>
            <person name="Klenk H."/>
        </authorList>
    </citation>
    <scope>CLEAVAGE</scope>
</reference>
<feature type="chain" id="PRO_0000079089" description="Nucleoprotein">
    <location>
        <begin position="1"/>
        <end position="498"/>
    </location>
</feature>
<feature type="region of interest" description="Disordered" evidence="2">
    <location>
        <begin position="1"/>
        <end position="21"/>
    </location>
</feature>
<feature type="short sequence motif" description="Unconventional nuclear localization signal" evidence="1">
    <location>
        <begin position="1"/>
        <end position="18"/>
    </location>
</feature>
<feature type="short sequence motif" description="Bipartite nuclear localization signal" evidence="1">
    <location>
        <begin position="198"/>
        <end position="216"/>
    </location>
</feature>
<feature type="compositionally biased region" description="Basic and acidic residues" evidence="2">
    <location>
        <begin position="8"/>
        <end position="21"/>
    </location>
</feature>
<feature type="site" description="Cleavage; by host caspase">
    <location>
        <begin position="16"/>
        <end position="17"/>
    </location>
</feature>
<feature type="helix" evidence="4">
    <location>
        <begin position="24"/>
        <end position="46"/>
    </location>
</feature>
<feature type="helix" evidence="4">
    <location>
        <begin position="51"/>
        <end position="54"/>
    </location>
</feature>
<feature type="helix" evidence="4">
    <location>
        <begin position="57"/>
        <end position="72"/>
    </location>
</feature>
<feature type="strand" evidence="4">
    <location>
        <begin position="75"/>
        <end position="78"/>
    </location>
</feature>
<feature type="strand" evidence="4">
    <location>
        <begin position="91"/>
        <end position="100"/>
    </location>
</feature>
<feature type="strand" evidence="4">
    <location>
        <begin position="103"/>
        <end position="112"/>
    </location>
</feature>
<feature type="helix" evidence="4">
    <location>
        <begin position="113"/>
        <end position="123"/>
    </location>
</feature>
<feature type="turn" evidence="4">
    <location>
        <begin position="124"/>
        <end position="126"/>
    </location>
</feature>
<feature type="helix" evidence="4">
    <location>
        <begin position="130"/>
        <end position="147"/>
    </location>
</feature>
<feature type="helix" evidence="4">
    <location>
        <begin position="151"/>
        <end position="155"/>
    </location>
</feature>
<feature type="turn" evidence="4">
    <location>
        <begin position="156"/>
        <end position="158"/>
    </location>
</feature>
<feature type="helix" evidence="4">
    <location>
        <begin position="161"/>
        <end position="166"/>
    </location>
</feature>
<feature type="turn" evidence="4">
    <location>
        <begin position="168"/>
        <end position="171"/>
    </location>
</feature>
<feature type="helix" evidence="4">
    <location>
        <begin position="178"/>
        <end position="181"/>
    </location>
</feature>
<feature type="helix" evidence="4">
    <location>
        <begin position="186"/>
        <end position="200"/>
    </location>
</feature>
<feature type="helix" evidence="4">
    <location>
        <begin position="204"/>
        <end position="207"/>
    </location>
</feature>
<feature type="helix" evidence="4">
    <location>
        <begin position="210"/>
        <end position="229"/>
    </location>
</feature>
<feature type="helix" evidence="4">
    <location>
        <begin position="233"/>
        <end position="243"/>
    </location>
</feature>
<feature type="helix" evidence="4">
    <location>
        <begin position="250"/>
        <end position="265"/>
    </location>
</feature>
<feature type="helix" evidence="4">
    <location>
        <begin position="278"/>
        <end position="286"/>
    </location>
</feature>
<feature type="helix" evidence="4">
    <location>
        <begin position="291"/>
        <end position="294"/>
    </location>
</feature>
<feature type="strand" evidence="4">
    <location>
        <begin position="298"/>
        <end position="300"/>
    </location>
</feature>
<feature type="helix" evidence="4">
    <location>
        <begin position="301"/>
        <end position="308"/>
    </location>
</feature>
<feature type="strand" evidence="4">
    <location>
        <begin position="313"/>
        <end position="316"/>
    </location>
</feature>
<feature type="helix" evidence="4">
    <location>
        <begin position="322"/>
        <end position="334"/>
    </location>
</feature>
<feature type="helix" evidence="4">
    <location>
        <begin position="341"/>
        <end position="348"/>
    </location>
</feature>
<feature type="helix" evidence="4">
    <location>
        <begin position="355"/>
        <end position="357"/>
    </location>
</feature>
<feature type="strand" evidence="4">
    <location>
        <begin position="375"/>
        <end position="378"/>
    </location>
</feature>
<feature type="strand" evidence="4">
    <location>
        <begin position="384"/>
        <end position="387"/>
    </location>
</feature>
<feature type="helix" evidence="4">
    <location>
        <begin position="422"/>
        <end position="428"/>
    </location>
</feature>
<feature type="helix" evidence="4">
    <location>
        <begin position="439"/>
        <end position="450"/>
    </location>
</feature>
<feature type="strand" evidence="4">
    <location>
        <begin position="463"/>
        <end position="465"/>
    </location>
</feature>
<feature type="strand" evidence="4">
    <location>
        <begin position="471"/>
        <end position="473"/>
    </location>
</feature>
<feature type="turn" evidence="4">
    <location>
        <begin position="487"/>
        <end position="490"/>
    </location>
</feature>